<protein>
    <recommendedName>
        <fullName evidence="1">UPF0310 protein RSal33209_2865</fullName>
    </recommendedName>
</protein>
<reference key="1">
    <citation type="journal article" date="2008" name="J. Bacteriol.">
        <title>Genome sequence of the fish pathogen Renibacterium salmoninarum suggests reductive evolution away from an environmental Arthrobacter ancestor.</title>
        <authorList>
            <person name="Wiens G.D."/>
            <person name="Rockey D.D."/>
            <person name="Wu Z."/>
            <person name="Chang J."/>
            <person name="Levy R."/>
            <person name="Crane S."/>
            <person name="Chen D.S."/>
            <person name="Capri G.R."/>
            <person name="Burnett J.R."/>
            <person name="Sudheesh P.S."/>
            <person name="Schipma M.J."/>
            <person name="Burd H."/>
            <person name="Bhattacharyya A."/>
            <person name="Rhodes L.D."/>
            <person name="Kaul R."/>
            <person name="Strom M.S."/>
        </authorList>
    </citation>
    <scope>NUCLEOTIDE SEQUENCE [LARGE SCALE GENOMIC DNA]</scope>
    <source>
        <strain>ATCC 33209 / DSM 20767 / JCM 11484 / NBRC 15589 / NCIMB 2235</strain>
    </source>
</reference>
<gene>
    <name type="ordered locus">RSal33209_2865</name>
</gene>
<name>Y2865_RENSM</name>
<accession>A9WTR8</accession>
<keyword id="KW-1185">Reference proteome</keyword>
<comment type="similarity">
    <text evidence="1">Belongs to the UPF0310 family.</text>
</comment>
<dbReference type="EMBL" id="CP000910">
    <property type="protein sequence ID" value="ABY24589.1"/>
    <property type="molecule type" value="Genomic_DNA"/>
</dbReference>
<dbReference type="RefSeq" id="WP_012246239.1">
    <property type="nucleotide sequence ID" value="NC_010168.1"/>
</dbReference>
<dbReference type="SMR" id="A9WTR8"/>
<dbReference type="STRING" id="288705.RSal33209_2865"/>
<dbReference type="KEGG" id="rsa:RSal33209_2865"/>
<dbReference type="eggNOG" id="COG1673">
    <property type="taxonomic scope" value="Bacteria"/>
</dbReference>
<dbReference type="HOGENOM" id="CLU_117727_0_0_11"/>
<dbReference type="Proteomes" id="UP000002007">
    <property type="component" value="Chromosome"/>
</dbReference>
<dbReference type="CDD" id="cd21132">
    <property type="entry name" value="EVE-like"/>
    <property type="match status" value="1"/>
</dbReference>
<dbReference type="Gene3D" id="3.10.590.10">
    <property type="entry name" value="ph1033 like domains"/>
    <property type="match status" value="1"/>
</dbReference>
<dbReference type="HAMAP" id="MF_00771">
    <property type="entry name" value="UPF0310"/>
    <property type="match status" value="1"/>
</dbReference>
<dbReference type="InterPro" id="IPR002740">
    <property type="entry name" value="EVE_domain"/>
</dbReference>
<dbReference type="InterPro" id="IPR015947">
    <property type="entry name" value="PUA-like_sf"/>
</dbReference>
<dbReference type="InterPro" id="IPR022996">
    <property type="entry name" value="UPF0310"/>
</dbReference>
<dbReference type="NCBIfam" id="NF002616">
    <property type="entry name" value="PRK02268.1-2"/>
    <property type="match status" value="1"/>
</dbReference>
<dbReference type="Pfam" id="PF01878">
    <property type="entry name" value="EVE"/>
    <property type="match status" value="1"/>
</dbReference>
<dbReference type="SUPFAM" id="SSF88697">
    <property type="entry name" value="PUA domain-like"/>
    <property type="match status" value="1"/>
</dbReference>
<evidence type="ECO:0000255" key="1">
    <source>
        <dbReference type="HAMAP-Rule" id="MF_00771"/>
    </source>
</evidence>
<feature type="chain" id="PRO_1000198409" description="UPF0310 protein RSal33209_2865">
    <location>
        <begin position="1"/>
        <end position="139"/>
    </location>
</feature>
<proteinExistence type="inferred from homology"/>
<sequence>MSNFWLAVVSAQHVRQGVEFGIVQTNHGKPQGIRRMSPGDGLVYYSPKTSYPDGEPLKAFTAVGRIADGEPWQSDVENFKPWRRKVHYDLSTDVSLAELQPQLEFTQEANWGYQLRRGVVPITEHDFALIRQAITSTTA</sequence>
<organism>
    <name type="scientific">Renibacterium salmoninarum (strain ATCC 33209 / DSM 20767 / JCM 11484 / NBRC 15589 / NCIMB 2235)</name>
    <dbReference type="NCBI Taxonomy" id="288705"/>
    <lineage>
        <taxon>Bacteria</taxon>
        <taxon>Bacillati</taxon>
        <taxon>Actinomycetota</taxon>
        <taxon>Actinomycetes</taxon>
        <taxon>Micrococcales</taxon>
        <taxon>Micrococcaceae</taxon>
        <taxon>Renibacterium</taxon>
    </lineage>
</organism>